<feature type="chain" id="PRO_1000114754" description="Bifunctional uridylyltransferase/uridylyl-removing enzyme">
    <location>
        <begin position="1"/>
        <end position="890"/>
    </location>
</feature>
<feature type="domain" description="HD" evidence="2">
    <location>
        <begin position="468"/>
        <end position="590"/>
    </location>
</feature>
<feature type="domain" description="ACT 1" evidence="1">
    <location>
        <begin position="709"/>
        <end position="789"/>
    </location>
</feature>
<feature type="domain" description="ACT 2" evidence="1">
    <location>
        <begin position="816"/>
        <end position="890"/>
    </location>
</feature>
<feature type="region of interest" description="Uridylyltransferase">
    <location>
        <begin position="1"/>
        <end position="349"/>
    </location>
</feature>
<feature type="region of interest" description="Uridylyl-removing">
    <location>
        <begin position="350"/>
        <end position="708"/>
    </location>
</feature>
<name>GLND_ECODH</name>
<evidence type="ECO:0000255" key="1">
    <source>
        <dbReference type="HAMAP-Rule" id="MF_00277"/>
    </source>
</evidence>
<evidence type="ECO:0000255" key="2">
    <source>
        <dbReference type="PROSITE-ProRule" id="PRU01175"/>
    </source>
</evidence>
<sequence>MNTLPEQYANTALPTLPGQPQNPCVWPRDELTVGGIKAHIDTFQRWLGDAFDNGISAEQLIEARTEFIDQLLQRLWIEAGFSQIADLALVAVGGYGRGELHPLSDVDLLILSRKKLPDDQAQKVGELLTLLWDVKLEVGHSVRTLEECMLEGLSDLTVATNLIESRLLIGDVALFLELQKHIFSEGFWPSDKFYAAKVEEQNQRHQRYHGTSYNLEPDIKSSPGGLRDIHTLQWVARRHFGATSLDEMVGFGFLTSAERAELNECLHILWRIRFALHLVVSRYDNRLLFDRQLSVAQRLNYSGEGNEPVERMMKDYFRVTRRVSELNQMLLQLFDEAILALPADEKPRPIDDEFQLRGTLIDLRDETLFMRQPEAILRMFYTMVHNSAITGIYSTTLRQLRHARRHLQQPLCNIPEARKLFLSILRHPGAVRRGLLPMHRHSVLGAYMPQWSHIVGQMQFDLFHAYTVDEHTIRVMLKLESFASEETRQRHPLCVDVWPRLPSTELIFIAALFHDIAKGRGGDHSILGAQDVVHFAELHGLNSRETQLVAWLVRQHLLMSVTAQRRDIQDPEVIKQFAEEVQTENRLRYLVCLTVADICATNETLWNSWKQSLLRELYFATEKQLRRGMQNTPDMRERVRHHQLQALALLRMDNIDEEALHQIWSRCRANYFVRHSPNQLAWHARHLLQHDLSKPLVLLSPQATRGGTEIFIWSPDRPYLFAAVCAELDRRNLSVHDAQIFTTRDGMAMDTFIVLEPDGNPLSADRHEVIRFGLEQVLTQSSWQPPQPRRQPAKLRHFTVETEVTFLPTHTDRKSFLELIALDQPGLLARVGKIFADLGISLHGARITTIGERVEDLFIIATADRRALNNELQQEVHQRLTEALNPNDKG</sequence>
<proteinExistence type="inferred from homology"/>
<gene>
    <name evidence="1" type="primary">glnD</name>
    <name type="ordered locus">ECDH10B_0146</name>
</gene>
<accession>B1XD36</accession>
<organism>
    <name type="scientific">Escherichia coli (strain K12 / DH10B)</name>
    <dbReference type="NCBI Taxonomy" id="316385"/>
    <lineage>
        <taxon>Bacteria</taxon>
        <taxon>Pseudomonadati</taxon>
        <taxon>Pseudomonadota</taxon>
        <taxon>Gammaproteobacteria</taxon>
        <taxon>Enterobacterales</taxon>
        <taxon>Enterobacteriaceae</taxon>
        <taxon>Escherichia</taxon>
    </lineage>
</organism>
<protein>
    <recommendedName>
        <fullName evidence="1">Bifunctional uridylyltransferase/uridylyl-removing enzyme</fullName>
        <shortName evidence="1">UTase/UR</shortName>
    </recommendedName>
    <alternativeName>
        <fullName evidence="1">Bifunctional [protein-PII] modification enzyme</fullName>
    </alternativeName>
    <alternativeName>
        <fullName evidence="1">Bifunctional nitrogen sensor protein</fullName>
    </alternativeName>
    <domain>
        <recommendedName>
            <fullName evidence="1">[Protein-PII] uridylyltransferase</fullName>
            <shortName evidence="1">PII uridylyltransferase</shortName>
            <shortName evidence="1">UTase</shortName>
            <ecNumber evidence="1">2.7.7.59</ecNumber>
        </recommendedName>
    </domain>
    <domain>
        <recommendedName>
            <fullName evidence="1">[Protein-PII]-UMP uridylyl-removing enzyme</fullName>
            <shortName evidence="1">UR</shortName>
            <ecNumber evidence="1">3.1.4.-</ecNumber>
        </recommendedName>
    </domain>
</protein>
<reference key="1">
    <citation type="journal article" date="2008" name="J. Bacteriol.">
        <title>The complete genome sequence of Escherichia coli DH10B: insights into the biology of a laboratory workhorse.</title>
        <authorList>
            <person name="Durfee T."/>
            <person name="Nelson R."/>
            <person name="Baldwin S."/>
            <person name="Plunkett G. III"/>
            <person name="Burland V."/>
            <person name="Mau B."/>
            <person name="Petrosino J.F."/>
            <person name="Qin X."/>
            <person name="Muzny D.M."/>
            <person name="Ayele M."/>
            <person name="Gibbs R.A."/>
            <person name="Csorgo B."/>
            <person name="Posfai G."/>
            <person name="Weinstock G.M."/>
            <person name="Blattner F.R."/>
        </authorList>
    </citation>
    <scope>NUCLEOTIDE SEQUENCE [LARGE SCALE GENOMIC DNA]</scope>
    <source>
        <strain>K12 / DH10B</strain>
    </source>
</reference>
<comment type="function">
    <text evidence="1">Modifies, by uridylylation and deuridylylation, the PII regulatory proteins (GlnB and homologs), in response to the nitrogen status of the cell that GlnD senses through the glutamine level. Under low glutamine levels, catalyzes the conversion of the PII proteins and UTP to PII-UMP and PPi, while under higher glutamine levels, GlnD hydrolyzes PII-UMP to PII and UMP (deuridylylation). Thus, controls uridylylation state and activity of the PII proteins, and plays an important role in the regulation of nitrogen assimilation and metabolism.</text>
</comment>
<comment type="catalytic activity">
    <reaction evidence="1">
        <text>[protein-PII]-L-tyrosine + UTP = [protein-PII]-uridylyl-L-tyrosine + diphosphate</text>
        <dbReference type="Rhea" id="RHEA:13673"/>
        <dbReference type="Rhea" id="RHEA-COMP:12147"/>
        <dbReference type="Rhea" id="RHEA-COMP:12148"/>
        <dbReference type="ChEBI" id="CHEBI:33019"/>
        <dbReference type="ChEBI" id="CHEBI:46398"/>
        <dbReference type="ChEBI" id="CHEBI:46858"/>
        <dbReference type="ChEBI" id="CHEBI:90602"/>
        <dbReference type="EC" id="2.7.7.59"/>
    </reaction>
</comment>
<comment type="catalytic activity">
    <reaction evidence="1">
        <text>[protein-PII]-uridylyl-L-tyrosine + H2O = [protein-PII]-L-tyrosine + UMP + H(+)</text>
        <dbReference type="Rhea" id="RHEA:48600"/>
        <dbReference type="Rhea" id="RHEA-COMP:12147"/>
        <dbReference type="Rhea" id="RHEA-COMP:12148"/>
        <dbReference type="ChEBI" id="CHEBI:15377"/>
        <dbReference type="ChEBI" id="CHEBI:15378"/>
        <dbReference type="ChEBI" id="CHEBI:46858"/>
        <dbReference type="ChEBI" id="CHEBI:57865"/>
        <dbReference type="ChEBI" id="CHEBI:90602"/>
    </reaction>
</comment>
<comment type="cofactor">
    <cofactor evidence="1">
        <name>Mg(2+)</name>
        <dbReference type="ChEBI" id="CHEBI:18420"/>
    </cofactor>
</comment>
<comment type="activity regulation">
    <text evidence="1">Uridylyltransferase (UTase) activity is inhibited by glutamine, while glutamine activates uridylyl-removing (UR) activity.</text>
</comment>
<comment type="domain">
    <text evidence="1">Has four distinct domains: an N-terminal nucleotidyltransferase (NT) domain responsible for UTase activity, a central HD domain that encodes UR activity, and two C-terminal ACT domains that seem to have a role in glutamine sensing.</text>
</comment>
<comment type="similarity">
    <text evidence="1">Belongs to the GlnD family.</text>
</comment>
<keyword id="KW-0378">Hydrolase</keyword>
<keyword id="KW-0460">Magnesium</keyword>
<keyword id="KW-0511">Multifunctional enzyme</keyword>
<keyword id="KW-0548">Nucleotidyltransferase</keyword>
<keyword id="KW-0677">Repeat</keyword>
<keyword id="KW-0808">Transferase</keyword>
<dbReference type="EC" id="2.7.7.59" evidence="1"/>
<dbReference type="EC" id="3.1.4.-" evidence="1"/>
<dbReference type="EMBL" id="CP000948">
    <property type="protein sequence ID" value="ACB01345.1"/>
    <property type="molecule type" value="Genomic_DNA"/>
</dbReference>
<dbReference type="RefSeq" id="WP_001094586.1">
    <property type="nucleotide sequence ID" value="NC_010473.1"/>
</dbReference>
<dbReference type="SMR" id="B1XD36"/>
<dbReference type="KEGG" id="ecd:ECDH10B_0146"/>
<dbReference type="HOGENOM" id="CLU_012833_0_0_6"/>
<dbReference type="GO" id="GO:0008773">
    <property type="term" value="F:[protein-PII] uridylyltransferase activity"/>
    <property type="evidence" value="ECO:0007669"/>
    <property type="project" value="UniProtKB-UniRule"/>
</dbReference>
<dbReference type="GO" id="GO:0008081">
    <property type="term" value="F:phosphoric diester hydrolase activity"/>
    <property type="evidence" value="ECO:0007669"/>
    <property type="project" value="UniProtKB-UniRule"/>
</dbReference>
<dbReference type="GO" id="GO:0006808">
    <property type="term" value="P:regulation of nitrogen utilization"/>
    <property type="evidence" value="ECO:0007669"/>
    <property type="project" value="UniProtKB-UniRule"/>
</dbReference>
<dbReference type="CDD" id="cd04899">
    <property type="entry name" value="ACT_ACR-UUR-like_2"/>
    <property type="match status" value="1"/>
</dbReference>
<dbReference type="CDD" id="cd04900">
    <property type="entry name" value="ACT_UUR-like_1"/>
    <property type="match status" value="1"/>
</dbReference>
<dbReference type="CDD" id="cd00077">
    <property type="entry name" value="HDc"/>
    <property type="match status" value="1"/>
</dbReference>
<dbReference type="CDD" id="cd05401">
    <property type="entry name" value="NT_GlnE_GlnD_like"/>
    <property type="match status" value="1"/>
</dbReference>
<dbReference type="FunFam" id="1.10.3210.10:FF:000005">
    <property type="entry name" value="Bifunctional uridylyltransferase/uridylyl-removing enzyme"/>
    <property type="match status" value="1"/>
</dbReference>
<dbReference type="Gene3D" id="1.10.3210.10">
    <property type="entry name" value="Hypothetical protein af1432"/>
    <property type="match status" value="1"/>
</dbReference>
<dbReference type="HAMAP" id="MF_00277">
    <property type="entry name" value="PII_uridylyl_transf"/>
    <property type="match status" value="1"/>
</dbReference>
<dbReference type="InterPro" id="IPR045865">
    <property type="entry name" value="ACT-like_dom_sf"/>
</dbReference>
<dbReference type="InterPro" id="IPR002912">
    <property type="entry name" value="ACT_dom"/>
</dbReference>
<dbReference type="InterPro" id="IPR003607">
    <property type="entry name" value="HD/PDEase_dom"/>
</dbReference>
<dbReference type="InterPro" id="IPR006674">
    <property type="entry name" value="HD_domain"/>
</dbReference>
<dbReference type="InterPro" id="IPR043519">
    <property type="entry name" value="NT_sf"/>
</dbReference>
<dbReference type="InterPro" id="IPR013546">
    <property type="entry name" value="PII_UdlTrfase/GS_AdlTrfase"/>
</dbReference>
<dbReference type="InterPro" id="IPR002934">
    <property type="entry name" value="Polymerase_NTP_transf_dom"/>
</dbReference>
<dbReference type="InterPro" id="IPR010043">
    <property type="entry name" value="UTase/UR"/>
</dbReference>
<dbReference type="NCBIfam" id="NF002487">
    <property type="entry name" value="PRK01759.1"/>
    <property type="match status" value="1"/>
</dbReference>
<dbReference type="NCBIfam" id="NF003448">
    <property type="entry name" value="PRK05007.1"/>
    <property type="match status" value="1"/>
</dbReference>
<dbReference type="NCBIfam" id="TIGR01693">
    <property type="entry name" value="UTase_glnD"/>
    <property type="match status" value="1"/>
</dbReference>
<dbReference type="PANTHER" id="PTHR47320">
    <property type="entry name" value="BIFUNCTIONAL URIDYLYLTRANSFERASE/URIDYLYL-REMOVING ENZYME"/>
    <property type="match status" value="1"/>
</dbReference>
<dbReference type="PANTHER" id="PTHR47320:SF1">
    <property type="entry name" value="BIFUNCTIONAL URIDYLYLTRANSFERASE_URIDYLYL-REMOVING ENZYME"/>
    <property type="match status" value="1"/>
</dbReference>
<dbReference type="Pfam" id="PF01842">
    <property type="entry name" value="ACT"/>
    <property type="match status" value="2"/>
</dbReference>
<dbReference type="Pfam" id="PF08335">
    <property type="entry name" value="GlnD_UR_UTase"/>
    <property type="match status" value="1"/>
</dbReference>
<dbReference type="Pfam" id="PF01966">
    <property type="entry name" value="HD"/>
    <property type="match status" value="1"/>
</dbReference>
<dbReference type="Pfam" id="PF01909">
    <property type="entry name" value="NTP_transf_2"/>
    <property type="match status" value="1"/>
</dbReference>
<dbReference type="PIRSF" id="PIRSF006288">
    <property type="entry name" value="PII_uridyltransf"/>
    <property type="match status" value="1"/>
</dbReference>
<dbReference type="SMART" id="SM00471">
    <property type="entry name" value="HDc"/>
    <property type="match status" value="1"/>
</dbReference>
<dbReference type="SUPFAM" id="SSF55021">
    <property type="entry name" value="ACT-like"/>
    <property type="match status" value="2"/>
</dbReference>
<dbReference type="SUPFAM" id="SSF109604">
    <property type="entry name" value="HD-domain/PDEase-like"/>
    <property type="match status" value="1"/>
</dbReference>
<dbReference type="SUPFAM" id="SSF81301">
    <property type="entry name" value="Nucleotidyltransferase"/>
    <property type="match status" value="1"/>
</dbReference>
<dbReference type="SUPFAM" id="SSF81593">
    <property type="entry name" value="Nucleotidyltransferase substrate binding subunit/domain"/>
    <property type="match status" value="1"/>
</dbReference>
<dbReference type="PROSITE" id="PS51671">
    <property type="entry name" value="ACT"/>
    <property type="match status" value="2"/>
</dbReference>
<dbReference type="PROSITE" id="PS51831">
    <property type="entry name" value="HD"/>
    <property type="match status" value="1"/>
</dbReference>